<dbReference type="EC" id="7.1.1.2"/>
<dbReference type="EMBL" id="AY484747">
    <property type="protein sequence ID" value="AAT98411.1"/>
    <property type="molecule type" value="Genomic_DNA"/>
</dbReference>
<dbReference type="PIR" id="S28759">
    <property type="entry name" value="S28759"/>
</dbReference>
<dbReference type="RefSeq" id="YP_073345.1">
    <property type="nucleotide sequence ID" value="NC_006161.1"/>
</dbReference>
<dbReference type="SMR" id="Q00230"/>
<dbReference type="GO" id="GO:0031966">
    <property type="term" value="C:mitochondrial membrane"/>
    <property type="evidence" value="ECO:0007669"/>
    <property type="project" value="UniProtKB-SubCell"/>
</dbReference>
<dbReference type="GO" id="GO:0008137">
    <property type="term" value="F:NADH dehydrogenase (ubiquinone) activity"/>
    <property type="evidence" value="ECO:0007669"/>
    <property type="project" value="UniProtKB-EC"/>
</dbReference>
<dbReference type="Gene3D" id="1.10.287.3510">
    <property type="match status" value="1"/>
</dbReference>
<dbReference type="InterPro" id="IPR039428">
    <property type="entry name" value="NUOK/Mnh_C1-like"/>
</dbReference>
<dbReference type="Pfam" id="PF00420">
    <property type="entry name" value="Oxidored_q2"/>
    <property type="match status" value="1"/>
</dbReference>
<comment type="function">
    <text evidence="1">Core subunit of the mitochondrial membrane respiratory chain NADH dehydrogenase (Complex I) that is believed to belong to the minimal assembly required for catalysis. Complex I functions in the transfer of electrons from NADH to the respiratory chain. The immediate electron acceptor for the enzyme is believed to be ubiquinone (By similarity).</text>
</comment>
<comment type="catalytic activity">
    <reaction>
        <text>a ubiquinone + NADH + 5 H(+)(in) = a ubiquinol + NAD(+) + 4 H(+)(out)</text>
        <dbReference type="Rhea" id="RHEA:29091"/>
        <dbReference type="Rhea" id="RHEA-COMP:9565"/>
        <dbReference type="Rhea" id="RHEA-COMP:9566"/>
        <dbReference type="ChEBI" id="CHEBI:15378"/>
        <dbReference type="ChEBI" id="CHEBI:16389"/>
        <dbReference type="ChEBI" id="CHEBI:17976"/>
        <dbReference type="ChEBI" id="CHEBI:57540"/>
        <dbReference type="ChEBI" id="CHEBI:57945"/>
        <dbReference type="EC" id="7.1.1.2"/>
    </reaction>
</comment>
<comment type="subcellular location">
    <subcellularLocation>
        <location evidence="1">Mitochondrion membrane</location>
        <topology evidence="1">Multi-pass membrane protein</topology>
    </subcellularLocation>
</comment>
<comment type="similarity">
    <text evidence="3">Belongs to the complex I subunit 4L family.</text>
</comment>
<evidence type="ECO:0000250" key="1"/>
<evidence type="ECO:0000255" key="2"/>
<evidence type="ECO:0000305" key="3"/>
<reference key="1">
    <citation type="journal article" date="1992" name="Genetics">
        <title>A novel mitochondrial genome organization for the blue mussel, Mytilus edulis.</title>
        <authorList>
            <person name="Hoffmann R.J."/>
            <person name="Boore J.L."/>
            <person name="Brown W.M."/>
        </authorList>
    </citation>
    <scope>NUCLEOTIDE SEQUENCE [GENOMIC DNA]</scope>
</reference>
<reference key="2">
    <citation type="journal article" date="2004" name="Mol. Biol. Evol.">
        <title>Complete sequences of the highly rearranged molluscan mitochondrial genomes of the scaphopod Graptacme eborea and the bivalve Mytilus edulis.</title>
        <authorList>
            <person name="Boore J.L."/>
            <person name="Medina M."/>
            <person name="Rosenberg L.A."/>
        </authorList>
    </citation>
    <scope>NUCLEOTIDE SEQUENCE [GENOMIC DNA]</scope>
</reference>
<feature type="chain" id="PRO_0000118452" description="NADH-ubiquinone oxidoreductase chain 4L">
    <location>
        <begin position="1"/>
        <end position="93"/>
    </location>
</feature>
<feature type="transmembrane region" description="Helical" evidence="2">
    <location>
        <begin position="1"/>
        <end position="21"/>
    </location>
</feature>
<feature type="transmembrane region" description="Helical" evidence="2">
    <location>
        <begin position="29"/>
        <end position="49"/>
    </location>
</feature>
<feature type="transmembrane region" description="Helical" evidence="2">
    <location>
        <begin position="54"/>
        <end position="74"/>
    </location>
</feature>
<accession>Q00230</accession>
<accession>Q68SQ9</accession>
<organism>
    <name type="scientific">Mytilus edulis</name>
    <name type="common">Blue mussel</name>
    <dbReference type="NCBI Taxonomy" id="6550"/>
    <lineage>
        <taxon>Eukaryota</taxon>
        <taxon>Metazoa</taxon>
        <taxon>Spiralia</taxon>
        <taxon>Lophotrochozoa</taxon>
        <taxon>Mollusca</taxon>
        <taxon>Bivalvia</taxon>
        <taxon>Autobranchia</taxon>
        <taxon>Pteriomorphia</taxon>
        <taxon>Mytilida</taxon>
        <taxon>Mytiloidea</taxon>
        <taxon>Mytilidae</taxon>
        <taxon>Mytilinae</taxon>
        <taxon>Mytilus</taxon>
    </lineage>
</organism>
<proteinExistence type="inferred from homology"/>
<name>NU4LM_MYTED</name>
<gene>
    <name type="primary">ND4L</name>
</gene>
<geneLocation type="mitochondrion"/>
<protein>
    <recommendedName>
        <fullName>NADH-ubiquinone oxidoreductase chain 4L</fullName>
        <ecNumber>7.1.1.2</ecNumber>
    </recommendedName>
    <alternativeName>
        <fullName>NADH dehydrogenase subunit 4L</fullName>
    </alternativeName>
</protein>
<sequence>MVWMKFLGVLLMSMGCFVIFRMNKHLLCLFVGLEMMSLGLLFVTHVFLMNQFWLILLILCLAVCEASICLALLVMVMRLCGDDLMSSLLSDGS</sequence>
<keyword id="KW-0249">Electron transport</keyword>
<keyword id="KW-0472">Membrane</keyword>
<keyword id="KW-0496">Mitochondrion</keyword>
<keyword id="KW-0520">NAD</keyword>
<keyword id="KW-0679">Respiratory chain</keyword>
<keyword id="KW-1278">Translocase</keyword>
<keyword id="KW-0812">Transmembrane</keyword>
<keyword id="KW-1133">Transmembrane helix</keyword>
<keyword id="KW-0813">Transport</keyword>
<keyword id="KW-0830">Ubiquinone</keyword>